<sequence length="194" mass="20735">MGVFNRLRSFYEARIAPTVASFLSRISPDPNIYTLASPVAAAAALPAWLYISPVASLLLIALSLLLDAVDGAVARFTGRVSPLGSFLDSSLDRISDSLYHATLYIAGVHPLIVIAMLSGGLIVPYLRAKGESLGLEVRGRGLMERGERSIAILAILAISIYNLQTALALASAAAVLVWITVIQRMVYIAGELRR</sequence>
<dbReference type="EC" id="2.7.8.39" evidence="5"/>
<dbReference type="EMBL" id="BA000002">
    <property type="protein sequence ID" value="BAA80525.2"/>
    <property type="molecule type" value="Genomic_DNA"/>
</dbReference>
<dbReference type="PIR" id="G72633">
    <property type="entry name" value="G72633"/>
</dbReference>
<dbReference type="RefSeq" id="WP_010866426.1">
    <property type="nucleotide sequence ID" value="NC_000854.2"/>
</dbReference>
<dbReference type="SMR" id="Q9YBS3"/>
<dbReference type="STRING" id="272557.APE_1526.1"/>
<dbReference type="EnsemblBacteria" id="BAA80525">
    <property type="protein sequence ID" value="BAA80525"/>
    <property type="gene ID" value="APE_1526.1"/>
</dbReference>
<dbReference type="GeneID" id="1446072"/>
<dbReference type="KEGG" id="ape:APE_1526.1"/>
<dbReference type="PATRIC" id="fig|272557.25.peg.1029"/>
<dbReference type="eggNOG" id="arCOG00670">
    <property type="taxonomic scope" value="Archaea"/>
</dbReference>
<dbReference type="BioCyc" id="MetaCyc:MONOMER-22060"/>
<dbReference type="BRENDA" id="2.7.8.39">
    <property type="organism ID" value="171"/>
</dbReference>
<dbReference type="UniPathway" id="UPA00085"/>
<dbReference type="Proteomes" id="UP000002518">
    <property type="component" value="Chromosome"/>
</dbReference>
<dbReference type="GO" id="GO:0005886">
    <property type="term" value="C:plasma membrane"/>
    <property type="evidence" value="ECO:0007669"/>
    <property type="project" value="UniProtKB-SubCell"/>
</dbReference>
<dbReference type="GO" id="GO:0000287">
    <property type="term" value="F:magnesium ion binding"/>
    <property type="evidence" value="ECO:0007669"/>
    <property type="project" value="UniProtKB-UniRule"/>
</dbReference>
<dbReference type="GO" id="GO:0016780">
    <property type="term" value="F:phosphotransferase activity, for other substituted phosphate groups"/>
    <property type="evidence" value="ECO:0007669"/>
    <property type="project" value="UniProtKB-UniRule"/>
</dbReference>
<dbReference type="GO" id="GO:0008654">
    <property type="term" value="P:phospholipid biosynthetic process"/>
    <property type="evidence" value="ECO:0007669"/>
    <property type="project" value="UniProtKB-UniRule"/>
</dbReference>
<dbReference type="Gene3D" id="1.20.120.1760">
    <property type="match status" value="1"/>
</dbReference>
<dbReference type="HAMAP" id="MF_02242">
    <property type="entry name" value="AIP_synthase"/>
    <property type="match status" value="1"/>
</dbReference>
<dbReference type="InterPro" id="IPR044270">
    <property type="entry name" value="AIP_synthase"/>
</dbReference>
<dbReference type="InterPro" id="IPR054868">
    <property type="entry name" value="archin_ph_syn"/>
</dbReference>
<dbReference type="InterPro" id="IPR000462">
    <property type="entry name" value="CDP-OH_P_trans"/>
</dbReference>
<dbReference type="InterPro" id="IPR043130">
    <property type="entry name" value="CDP-OH_PTrfase_TM_dom"/>
</dbReference>
<dbReference type="InterPro" id="IPR048254">
    <property type="entry name" value="CDP_ALCOHOL_P_TRANSF_CS"/>
</dbReference>
<dbReference type="NCBIfam" id="NF040950">
    <property type="entry name" value="archin_ph_syn"/>
    <property type="match status" value="1"/>
</dbReference>
<dbReference type="Pfam" id="PF01066">
    <property type="entry name" value="CDP-OH_P_transf"/>
    <property type="match status" value="1"/>
</dbReference>
<dbReference type="PROSITE" id="PS00379">
    <property type="entry name" value="CDP_ALCOHOL_P_TRANSF"/>
    <property type="match status" value="1"/>
</dbReference>
<accession>Q9YBS3</accession>
<reference key="1">
    <citation type="journal article" date="1999" name="DNA Res.">
        <title>Complete genome sequence of an aerobic hyper-thermophilic crenarchaeon, Aeropyrum pernix K1.</title>
        <authorList>
            <person name="Kawarabayasi Y."/>
            <person name="Hino Y."/>
            <person name="Horikawa H."/>
            <person name="Yamazaki S."/>
            <person name="Haikawa Y."/>
            <person name="Jin-no K."/>
            <person name="Takahashi M."/>
            <person name="Sekine M."/>
            <person name="Baba S."/>
            <person name="Ankai A."/>
            <person name="Kosugi H."/>
            <person name="Hosoyama A."/>
            <person name="Fukui S."/>
            <person name="Nagai Y."/>
            <person name="Nishijima K."/>
            <person name="Nakazawa H."/>
            <person name="Takamiya M."/>
            <person name="Masuda S."/>
            <person name="Funahashi T."/>
            <person name="Tanaka T."/>
            <person name="Kudoh Y."/>
            <person name="Yamazaki J."/>
            <person name="Kushida N."/>
            <person name="Oguchi A."/>
            <person name="Aoki K."/>
            <person name="Kubota K."/>
            <person name="Nakamura Y."/>
            <person name="Nomura N."/>
            <person name="Sako Y."/>
            <person name="Kikuchi H."/>
        </authorList>
    </citation>
    <scope>NUCLEOTIDE SEQUENCE [LARGE SCALE GENOMIC DNA]</scope>
    <source>
        <strain>ATCC 700893 / DSM 11879 / JCM 9820 / NBRC 100138 / K1</strain>
    </source>
</reference>
<reference key="2">
    <citation type="journal article" date="2014" name="Biochem. Biophys. Res. Commun.">
        <title>Ubiquitous distribution of phosphatidylinositol phosphate synthase and archaetidylinositol phosphate synthase in Bacteria and Archaea, which contain inositol phospholipid.</title>
        <authorList>
            <person name="Morii H."/>
            <person name="Ogawa M."/>
            <person name="Fukuda K."/>
            <person name="Taniguchi H."/>
        </authorList>
    </citation>
    <scope>FUNCTION</scope>
    <scope>CATALYTIC ACTIVITY</scope>
    <scope>PATHWAY</scope>
</reference>
<gene>
    <name evidence="9" type="ordered locus">APE_1526.1</name>
</gene>
<keyword id="KW-1003">Cell membrane</keyword>
<keyword id="KW-0444">Lipid biosynthesis</keyword>
<keyword id="KW-0443">Lipid metabolism</keyword>
<keyword id="KW-0460">Magnesium</keyword>
<keyword id="KW-0464">Manganese</keyword>
<keyword id="KW-0472">Membrane</keyword>
<keyword id="KW-0479">Metal-binding</keyword>
<keyword id="KW-1208">Phospholipid metabolism</keyword>
<keyword id="KW-1185">Reference proteome</keyword>
<keyword id="KW-0808">Transferase</keyword>
<keyword id="KW-0812">Transmembrane</keyword>
<keyword id="KW-1133">Transmembrane helix</keyword>
<comment type="function">
    <text evidence="5">Catalyzes the formation of archaetidylinositol phosphate (AIP) from CDP-archaeol (CDP-ArOH or CDP-2,3-bis-(O-phytanyl)-sn-glycerol) and 1L-myo-inositol 1-phosphate (IP or 1D-myo-inositol 3-phosphate). AIP is a precursor of archaetidyl-myo-inositol (AI), an ether-type inositol phospholipid ubiquitously distributed in archaea membranes and essential for glycolipid biosynthesis in archaea.</text>
</comment>
<comment type="catalytic activity">
    <reaction evidence="5">
        <text>CDP-2,3-bis-O-(phytanyl)-sn-glycerol + 1D-myo-inositol 3-phosphate = saturated 1-archaetidyl-1D-myo-inositol 3-phosphate + CMP + H(+)</text>
        <dbReference type="Rhea" id="RHEA:36823"/>
        <dbReference type="ChEBI" id="CHEBI:15378"/>
        <dbReference type="ChEBI" id="CHEBI:58401"/>
        <dbReference type="ChEBI" id="CHEBI:60377"/>
        <dbReference type="ChEBI" id="CHEBI:74004"/>
        <dbReference type="ChEBI" id="CHEBI:74006"/>
        <dbReference type="EC" id="2.7.8.39"/>
    </reaction>
</comment>
<comment type="cofactor">
    <cofactor evidence="1">
        <name>Mn(2+)</name>
        <dbReference type="ChEBI" id="CHEBI:29035"/>
    </cofactor>
    <cofactor evidence="1">
        <name>Mg(2+)</name>
        <dbReference type="ChEBI" id="CHEBI:18420"/>
    </cofactor>
    <text evidence="1">Binds 2 Mg(2+) or Mn(2+) ions per subunit.</text>
</comment>
<comment type="pathway">
    <text evidence="8">Lipid metabolism; phospholipid metabolism.</text>
</comment>
<comment type="subcellular location">
    <subcellularLocation>
        <location evidence="3">Cell membrane</location>
        <topology evidence="3">Multi-pass membrane protein</topology>
    </subcellularLocation>
</comment>
<comment type="similarity">
    <text evidence="4 7">Belongs to the CDP-alcohol phosphatidyltransferase class-I family.</text>
</comment>
<name>AIPS_AERPE</name>
<protein>
    <recommendedName>
        <fullName evidence="6">Archaetidylinositol phosphate synthase</fullName>
        <shortName evidence="6">AIP synthase</shortName>
        <ecNumber evidence="5">2.7.8.39</ecNumber>
    </recommendedName>
</protein>
<organism>
    <name type="scientific">Aeropyrum pernix (strain ATCC 700893 / DSM 11879 / JCM 9820 / NBRC 100138 / K1)</name>
    <dbReference type="NCBI Taxonomy" id="272557"/>
    <lineage>
        <taxon>Archaea</taxon>
        <taxon>Thermoproteota</taxon>
        <taxon>Thermoprotei</taxon>
        <taxon>Desulfurococcales</taxon>
        <taxon>Desulfurococcaceae</taxon>
        <taxon>Aeropyrum</taxon>
    </lineage>
</organism>
<evidence type="ECO:0000250" key="1">
    <source>
        <dbReference type="UniProtKB" id="O27726"/>
    </source>
</evidence>
<evidence type="ECO:0000250" key="2">
    <source>
        <dbReference type="UniProtKB" id="P9WPG7"/>
    </source>
</evidence>
<evidence type="ECO:0000255" key="3"/>
<evidence type="ECO:0000255" key="4">
    <source>
        <dbReference type="HAMAP-Rule" id="MF_02242"/>
    </source>
</evidence>
<evidence type="ECO:0000269" key="5">
    <source>
    </source>
</evidence>
<evidence type="ECO:0000303" key="6">
    <source>
    </source>
</evidence>
<evidence type="ECO:0000305" key="7"/>
<evidence type="ECO:0000305" key="8">
    <source>
    </source>
</evidence>
<evidence type="ECO:0000312" key="9">
    <source>
        <dbReference type="EMBL" id="BAA80525.2"/>
    </source>
</evidence>
<proteinExistence type="evidence at protein level"/>
<feature type="chain" id="PRO_0000448366" description="Archaetidylinositol phosphate synthase">
    <location>
        <begin position="1"/>
        <end position="194"/>
    </location>
</feature>
<feature type="transmembrane region" description="Helical" evidence="3">
    <location>
        <begin position="32"/>
        <end position="51"/>
    </location>
</feature>
<feature type="transmembrane region" description="Helical" evidence="3">
    <location>
        <begin position="58"/>
        <end position="78"/>
    </location>
</feature>
<feature type="transmembrane region" description="Helical" evidence="3">
    <location>
        <begin position="103"/>
        <end position="123"/>
    </location>
</feature>
<feature type="transmembrane region" description="Helical" evidence="3">
    <location>
        <begin position="150"/>
        <end position="170"/>
    </location>
</feature>
<feature type="transmembrane region" description="Helical" evidence="3">
    <location>
        <begin position="172"/>
        <end position="192"/>
    </location>
</feature>
<feature type="active site" description="Proton acceptor" evidence="2">
    <location>
        <position position="92"/>
    </location>
</feature>
<feature type="binding site" evidence="2">
    <location>
        <position position="67"/>
    </location>
    <ligand>
        <name>Mg(2+)</name>
        <dbReference type="ChEBI" id="CHEBI:18420"/>
        <label>1</label>
    </ligand>
</feature>
<feature type="binding site" evidence="2">
    <location>
        <position position="67"/>
    </location>
    <ligand>
        <name>Mg(2+)</name>
        <dbReference type="ChEBI" id="CHEBI:18420"/>
        <label>2</label>
    </ligand>
</feature>
<feature type="binding site" evidence="2">
    <location>
        <position position="70"/>
    </location>
    <ligand>
        <name>Mg(2+)</name>
        <dbReference type="ChEBI" id="CHEBI:18420"/>
        <label>1</label>
    </ligand>
</feature>
<feature type="binding site" evidence="2">
    <location>
        <position position="88"/>
    </location>
    <ligand>
        <name>Mg(2+)</name>
        <dbReference type="ChEBI" id="CHEBI:18420"/>
        <label>1</label>
    </ligand>
</feature>
<feature type="binding site" evidence="2">
    <location>
        <position position="88"/>
    </location>
    <ligand>
        <name>Mg(2+)</name>
        <dbReference type="ChEBI" id="CHEBI:18420"/>
        <label>2</label>
    </ligand>
</feature>
<feature type="binding site" evidence="2">
    <location>
        <position position="92"/>
    </location>
    <ligand>
        <name>Mg(2+)</name>
        <dbReference type="ChEBI" id="CHEBI:18420"/>
        <label>2</label>
    </ligand>
</feature>